<accession>P47812</accession>
<accession>Q5D076</accession>
<feature type="chain" id="PRO_0000186299" description="Mitogen-activated protein kinase 14">
    <location>
        <begin position="1"/>
        <end position="361"/>
    </location>
</feature>
<feature type="domain" description="Protein kinase" evidence="2">
    <location>
        <begin position="25"/>
        <end position="309"/>
    </location>
</feature>
<feature type="short sequence motif" description="TXY">
    <location>
        <begin position="181"/>
        <end position="183"/>
    </location>
</feature>
<feature type="active site" description="Proton acceptor" evidence="2">
    <location>
        <position position="151"/>
    </location>
</feature>
<feature type="binding site" evidence="2">
    <location>
        <begin position="31"/>
        <end position="39"/>
    </location>
    <ligand>
        <name>ATP</name>
        <dbReference type="ChEBI" id="CHEBI:30616"/>
    </ligand>
</feature>
<feature type="binding site" evidence="2">
    <location>
        <position position="54"/>
    </location>
    <ligand>
        <name>ATP</name>
        <dbReference type="ChEBI" id="CHEBI:30616"/>
    </ligand>
</feature>
<feature type="modified residue" description="Phosphothreonine" evidence="1">
    <location>
        <position position="181"/>
    </location>
</feature>
<feature type="modified residue" description="Phosphotyrosine" evidence="1">
    <location>
        <position position="183"/>
    </location>
</feature>
<keyword id="KW-0067">ATP-binding</keyword>
<keyword id="KW-0418">Kinase</keyword>
<keyword id="KW-0547">Nucleotide-binding</keyword>
<keyword id="KW-0597">Phosphoprotein</keyword>
<keyword id="KW-1185">Reference proteome</keyword>
<keyword id="KW-0723">Serine/threonine-protein kinase</keyword>
<keyword id="KW-0346">Stress response</keyword>
<keyword id="KW-0804">Transcription</keyword>
<keyword id="KW-0805">Transcription regulation</keyword>
<keyword id="KW-0808">Transferase</keyword>
<reference key="1">
    <citation type="journal article" date="1994" name="Cell">
        <title>A novel kinase cascade triggered by stress and heat shock that stimulates MAPKAP kinase-2 and phosphorylation of the small heat shock proteins.</title>
        <authorList>
            <person name="Rouse J."/>
            <person name="Cohen P."/>
            <person name="Trigon S."/>
            <person name="Morange M."/>
            <person name="Alonso-Llamazares A."/>
            <person name="Zamanillo D."/>
            <person name="Hunt T."/>
            <person name="Nebreda A.R."/>
        </authorList>
    </citation>
    <scope>NUCLEOTIDE SEQUENCE [MRNA]</scope>
</reference>
<reference key="2">
    <citation type="submission" date="2003-08" db="EMBL/GenBank/DDBJ databases">
        <authorList>
            <consortium name="NIH - Xenopus Gene Collection (XGC) project"/>
        </authorList>
    </citation>
    <scope>NUCLEOTIDE SEQUENCE [LARGE SCALE MRNA]</scope>
    <source>
        <tissue>Spleen</tissue>
    </source>
</reference>
<dbReference type="EC" id="2.7.11.24"/>
<dbReference type="EMBL" id="X80751">
    <property type="protein sequence ID" value="CAA56727.1"/>
    <property type="molecule type" value="mRNA"/>
</dbReference>
<dbReference type="EMBL" id="BC056064">
    <property type="protein sequence ID" value="AAH56064.1"/>
    <property type="molecule type" value="mRNA"/>
</dbReference>
<dbReference type="PIR" id="A54805">
    <property type="entry name" value="A54805"/>
</dbReference>
<dbReference type="RefSeq" id="NP_001080300.1">
    <property type="nucleotide sequence ID" value="NM_001086831.1"/>
</dbReference>
<dbReference type="SMR" id="P47812"/>
<dbReference type="BioGRID" id="98234">
    <property type="interactions" value="1"/>
</dbReference>
<dbReference type="iPTMnet" id="P47812"/>
<dbReference type="DNASU" id="379992"/>
<dbReference type="GeneID" id="379992"/>
<dbReference type="KEGG" id="xla:379992"/>
<dbReference type="AGR" id="Xenbase:XB-GENE-1018624"/>
<dbReference type="CTD" id="379992"/>
<dbReference type="Xenbase" id="XB-GENE-1018624">
    <property type="gene designation" value="mapk14.S"/>
</dbReference>
<dbReference type="OMA" id="NRYTDLN"/>
<dbReference type="OrthoDB" id="192887at2759"/>
<dbReference type="BRENDA" id="2.7.11.24">
    <property type="organism ID" value="6725"/>
</dbReference>
<dbReference type="Proteomes" id="UP000186698">
    <property type="component" value="Chromosome 2S"/>
</dbReference>
<dbReference type="Bgee" id="379992">
    <property type="expression patterns" value="Expressed in zone of skin and 19 other cell types or tissues"/>
</dbReference>
<dbReference type="GO" id="GO:0005737">
    <property type="term" value="C:cytoplasm"/>
    <property type="evidence" value="ECO:0000318"/>
    <property type="project" value="GO_Central"/>
</dbReference>
<dbReference type="GO" id="GO:0005634">
    <property type="term" value="C:nucleus"/>
    <property type="evidence" value="ECO:0000318"/>
    <property type="project" value="GO_Central"/>
</dbReference>
<dbReference type="GO" id="GO:0005524">
    <property type="term" value="F:ATP binding"/>
    <property type="evidence" value="ECO:0007669"/>
    <property type="project" value="UniProtKB-KW"/>
</dbReference>
<dbReference type="GO" id="GO:0004707">
    <property type="term" value="F:MAP kinase activity"/>
    <property type="evidence" value="ECO:0000250"/>
    <property type="project" value="UniProtKB"/>
</dbReference>
<dbReference type="GO" id="GO:0106310">
    <property type="term" value="F:protein serine kinase activity"/>
    <property type="evidence" value="ECO:0007669"/>
    <property type="project" value="RHEA"/>
</dbReference>
<dbReference type="GO" id="GO:0004674">
    <property type="term" value="F:protein serine/threonine kinase activity"/>
    <property type="evidence" value="ECO:0000318"/>
    <property type="project" value="GO_Central"/>
</dbReference>
<dbReference type="GO" id="GO:0035556">
    <property type="term" value="P:intracellular signal transduction"/>
    <property type="evidence" value="ECO:0000250"/>
    <property type="project" value="UniProtKB"/>
</dbReference>
<dbReference type="GO" id="GO:0038066">
    <property type="term" value="P:p38MAPK cascade"/>
    <property type="evidence" value="ECO:0000250"/>
    <property type="project" value="UniProtKB"/>
</dbReference>
<dbReference type="GO" id="GO:0045663">
    <property type="term" value="P:positive regulation of myoblast differentiation"/>
    <property type="evidence" value="ECO:0000250"/>
    <property type="project" value="UniProtKB"/>
</dbReference>
<dbReference type="GO" id="GO:1901741">
    <property type="term" value="P:positive regulation of myoblast fusion"/>
    <property type="evidence" value="ECO:0000250"/>
    <property type="project" value="UniProtKB"/>
</dbReference>
<dbReference type="GO" id="GO:0010831">
    <property type="term" value="P:positive regulation of myotube differentiation"/>
    <property type="evidence" value="ECO:0000250"/>
    <property type="project" value="UniProtKB"/>
</dbReference>
<dbReference type="GO" id="GO:0006357">
    <property type="term" value="P:regulation of transcription by RNA polymerase II"/>
    <property type="evidence" value="ECO:0000250"/>
    <property type="project" value="UniProtKB"/>
</dbReference>
<dbReference type="CDD" id="cd07877">
    <property type="entry name" value="STKc_p38alpha"/>
    <property type="match status" value="1"/>
</dbReference>
<dbReference type="FunFam" id="1.10.510.10:FF:000063">
    <property type="entry name" value="Mitogen-activated protein kinase 14"/>
    <property type="match status" value="1"/>
</dbReference>
<dbReference type="FunFam" id="3.30.200.20:FF:000769">
    <property type="entry name" value="Mitogen-activated protein kinase 14"/>
    <property type="match status" value="1"/>
</dbReference>
<dbReference type="Gene3D" id="3.30.200.20">
    <property type="entry name" value="Phosphorylase Kinase, domain 1"/>
    <property type="match status" value="1"/>
</dbReference>
<dbReference type="Gene3D" id="1.10.510.10">
    <property type="entry name" value="Transferase(Phosphotransferase) domain 1"/>
    <property type="match status" value="1"/>
</dbReference>
<dbReference type="InterPro" id="IPR011009">
    <property type="entry name" value="Kinase-like_dom_sf"/>
</dbReference>
<dbReference type="InterPro" id="IPR050117">
    <property type="entry name" value="MAP_kinase"/>
</dbReference>
<dbReference type="InterPro" id="IPR003527">
    <property type="entry name" value="MAP_kinase_CS"/>
</dbReference>
<dbReference type="InterPro" id="IPR038784">
    <property type="entry name" value="MAPK14"/>
</dbReference>
<dbReference type="InterPro" id="IPR008352">
    <property type="entry name" value="MAPK_p38-like"/>
</dbReference>
<dbReference type="InterPro" id="IPR000719">
    <property type="entry name" value="Prot_kinase_dom"/>
</dbReference>
<dbReference type="InterPro" id="IPR017441">
    <property type="entry name" value="Protein_kinase_ATP_BS"/>
</dbReference>
<dbReference type="PANTHER" id="PTHR24055">
    <property type="entry name" value="MITOGEN-ACTIVATED PROTEIN KINASE"/>
    <property type="match status" value="1"/>
</dbReference>
<dbReference type="Pfam" id="PF00069">
    <property type="entry name" value="Pkinase"/>
    <property type="match status" value="1"/>
</dbReference>
<dbReference type="PRINTS" id="PR01773">
    <property type="entry name" value="P38MAPKINASE"/>
</dbReference>
<dbReference type="SMART" id="SM00220">
    <property type="entry name" value="S_TKc"/>
    <property type="match status" value="1"/>
</dbReference>
<dbReference type="SUPFAM" id="SSF56112">
    <property type="entry name" value="Protein kinase-like (PK-like)"/>
    <property type="match status" value="1"/>
</dbReference>
<dbReference type="PROSITE" id="PS01351">
    <property type="entry name" value="MAPK"/>
    <property type="match status" value="1"/>
</dbReference>
<dbReference type="PROSITE" id="PS00107">
    <property type="entry name" value="PROTEIN_KINASE_ATP"/>
    <property type="match status" value="1"/>
</dbReference>
<dbReference type="PROSITE" id="PS50011">
    <property type="entry name" value="PROTEIN_KINASE_DOM"/>
    <property type="match status" value="1"/>
</dbReference>
<name>MK14_XENLA</name>
<proteinExistence type="evidence at transcript level"/>
<comment type="function">
    <text>Serine/threonine kinase which acts as an essential component of the MAP kinase signal transduction pathway. mapk14a is one of the four p38 MAPKs which play an important role in the cascades of cellular responses evoked by extracellular stimuli such as pro-inflammatory cytokines or physical stress leading to direct activation of transcription factors. Accordingly, p38 MAPKs phosphorylate a broad range of proteins and it has been estimated that they may have approximately 200 to 300 substrates each. Some of the targets are downstream kinases which are activated through phosphorylation and further phosphorylate additional targets. MPK2 is activated by upstream MAPKK/MAPKKK and stimulates MAPKAP kinase 2 to phosphorylate small heat shock proteins. Does not phosphorylate myelin basic protein or MAPKAP kinase 1.</text>
</comment>
<comment type="catalytic activity">
    <reaction>
        <text>L-seryl-[protein] + ATP = O-phospho-L-seryl-[protein] + ADP + H(+)</text>
        <dbReference type="Rhea" id="RHEA:17989"/>
        <dbReference type="Rhea" id="RHEA-COMP:9863"/>
        <dbReference type="Rhea" id="RHEA-COMP:11604"/>
        <dbReference type="ChEBI" id="CHEBI:15378"/>
        <dbReference type="ChEBI" id="CHEBI:29999"/>
        <dbReference type="ChEBI" id="CHEBI:30616"/>
        <dbReference type="ChEBI" id="CHEBI:83421"/>
        <dbReference type="ChEBI" id="CHEBI:456216"/>
        <dbReference type="EC" id="2.7.11.24"/>
    </reaction>
</comment>
<comment type="catalytic activity">
    <reaction>
        <text>L-threonyl-[protein] + ATP = O-phospho-L-threonyl-[protein] + ADP + H(+)</text>
        <dbReference type="Rhea" id="RHEA:46608"/>
        <dbReference type="Rhea" id="RHEA-COMP:11060"/>
        <dbReference type="Rhea" id="RHEA-COMP:11605"/>
        <dbReference type="ChEBI" id="CHEBI:15378"/>
        <dbReference type="ChEBI" id="CHEBI:30013"/>
        <dbReference type="ChEBI" id="CHEBI:30616"/>
        <dbReference type="ChEBI" id="CHEBI:61977"/>
        <dbReference type="ChEBI" id="CHEBI:456216"/>
        <dbReference type="EC" id="2.7.11.24"/>
    </reaction>
</comment>
<comment type="cofactor">
    <cofactor evidence="1">
        <name>Mg(2+)</name>
        <dbReference type="ChEBI" id="CHEBI:18420"/>
    </cofactor>
</comment>
<comment type="activity regulation">
    <text>Activated by tyrosine and threonine phosphorylation.</text>
</comment>
<comment type="domain">
    <text>The TXY motif contains the threonine and tyrosine residues whose phosphorylation activates the MAP kinases.</text>
</comment>
<comment type="PTM">
    <text evidence="1">Dually phosphorylated on Thr-181 and Tyr-183, which activates the enzyme.</text>
</comment>
<comment type="similarity">
    <text evidence="3">Belongs to the protein kinase superfamily. CMGC Ser/Thr protein kinase family. MAP kinase subfamily.</text>
</comment>
<protein>
    <recommendedName>
        <fullName>Mitogen-activated protein kinase 14</fullName>
        <shortName>MAP kinase 14</shortName>
        <shortName>MAPK 14</shortName>
        <ecNumber>2.7.11.24</ecNumber>
    </recommendedName>
    <alternativeName>
        <fullName>Mitogen-activated protein kinase 2</fullName>
        <shortName>MAP kinase 2</shortName>
        <shortName>MPK2</shortName>
    </alternativeName>
</protein>
<organism>
    <name type="scientific">Xenopus laevis</name>
    <name type="common">African clawed frog</name>
    <dbReference type="NCBI Taxonomy" id="8355"/>
    <lineage>
        <taxon>Eukaryota</taxon>
        <taxon>Metazoa</taxon>
        <taxon>Chordata</taxon>
        <taxon>Craniata</taxon>
        <taxon>Vertebrata</taxon>
        <taxon>Euteleostomi</taxon>
        <taxon>Amphibia</taxon>
        <taxon>Batrachia</taxon>
        <taxon>Anura</taxon>
        <taxon>Pipoidea</taxon>
        <taxon>Pipidae</taxon>
        <taxon>Xenopodinae</taxon>
        <taxon>Xenopus</taxon>
        <taxon>Xenopus</taxon>
    </lineage>
</organism>
<sequence>MSSNQSYVFYRQELNKTLWEVPDRYQNLTPVGSGAYGSVCSSFDTRTALRIAVKKLSRPFQSIIHAKRTYRELRLLKHMKHENVIGLLDVFSPAKSFEEFNDVYLVTHLMGADLNNIVKCQKLTDDHVQFLIYQILRGLKYIHSAGIIHRDLKPSNLAVNEDCELKILDFGLARHTDEEMTGYVATRWYRAPEIMLNWMHYNQTVDIWSVGCIMAELLTGRTLFPGTDHIDQLKLILRLVGTPEPELLQKISSEAARNYIQSLPYMPKMNFEDVFLGANPQAVDLLEKMLVLDTDKRITAAEALAHSYFAQYHDPDDEPIAEPYDQSFESRELDIEEWKRLTYEEVTCFVPPPLDSEEMES</sequence>
<evidence type="ECO:0000250" key="1"/>
<evidence type="ECO:0000255" key="2">
    <source>
        <dbReference type="PROSITE-ProRule" id="PRU00159"/>
    </source>
</evidence>
<evidence type="ECO:0000305" key="3"/>
<gene>
    <name type="primary">mapk14</name>
    <name type="synonym">mpk2</name>
</gene>